<keyword id="KW-0025">Alternative splicing</keyword>
<keyword id="KW-1003">Cell membrane</keyword>
<keyword id="KW-0966">Cell projection</keyword>
<keyword id="KW-0868">Chloride</keyword>
<keyword id="KW-0869">Chloride channel</keyword>
<keyword id="KW-1015">Disulfide bond</keyword>
<keyword id="KW-0325">Glycoprotein</keyword>
<keyword id="KW-0407">Ion channel</keyword>
<keyword id="KW-0406">Ion transport</keyword>
<keyword id="KW-1071">Ligand-gated ion channel</keyword>
<keyword id="KW-0472">Membrane</keyword>
<keyword id="KW-0479">Metal-binding</keyword>
<keyword id="KW-0628">Postsynaptic cell membrane</keyword>
<keyword id="KW-0675">Receptor</keyword>
<keyword id="KW-1185">Reference proteome</keyword>
<keyword id="KW-0732">Signal</keyword>
<keyword id="KW-0770">Synapse</keyword>
<keyword id="KW-0812">Transmembrane</keyword>
<keyword id="KW-1133">Transmembrane helix</keyword>
<keyword id="KW-0813">Transport</keyword>
<keyword id="KW-0862">Zinc</keyword>
<evidence type="ECO:0000250" key="1">
    <source>
        <dbReference type="UniProtKB" id="P23415"/>
    </source>
</evidence>
<evidence type="ECO:0000250" key="2">
    <source>
        <dbReference type="UniProtKB" id="P23416"/>
    </source>
</evidence>
<evidence type="ECO:0000250" key="3">
    <source>
        <dbReference type="UniProtKB" id="Q7TNC8"/>
    </source>
</evidence>
<evidence type="ECO:0000255" key="4"/>
<evidence type="ECO:0000269" key="5">
    <source>
    </source>
</evidence>
<evidence type="ECO:0000269" key="6">
    <source>
    </source>
</evidence>
<evidence type="ECO:0000305" key="7"/>
<evidence type="ECO:0000305" key="8">
    <source>
    </source>
</evidence>
<evidence type="ECO:0000312" key="9">
    <source>
        <dbReference type="RGD" id="2705"/>
    </source>
</evidence>
<dbReference type="EMBL" id="X57281">
    <property type="protein sequence ID" value="CAA40549.1"/>
    <property type="molecule type" value="mRNA"/>
</dbReference>
<dbReference type="EMBL" id="X61159">
    <property type="protein sequence ID" value="CAA43471.1"/>
    <property type="molecule type" value="mRNA"/>
</dbReference>
<dbReference type="EMBL" id="AJ310837">
    <property type="protein sequence ID" value="CAC35981.1"/>
    <property type="molecule type" value="mRNA"/>
</dbReference>
<dbReference type="PIR" id="S14816">
    <property type="entry name" value="S14816"/>
</dbReference>
<dbReference type="PIR" id="S18836">
    <property type="entry name" value="S18836"/>
</dbReference>
<dbReference type="RefSeq" id="NP_036700.1">
    <property type="nucleotide sequence ID" value="NM_012568.3"/>
</dbReference>
<dbReference type="RefSeq" id="XP_003752087.1">
    <property type="nucleotide sequence ID" value="XM_003752039.4"/>
</dbReference>
<dbReference type="RefSeq" id="XP_017457394.1">
    <property type="nucleotide sequence ID" value="XM_017601905.1"/>
</dbReference>
<dbReference type="SMR" id="P22771"/>
<dbReference type="CORUM" id="P22771"/>
<dbReference type="FunCoup" id="P22771">
    <property type="interactions" value="62"/>
</dbReference>
<dbReference type="STRING" id="10116.ENSRNOP00000004443"/>
<dbReference type="BindingDB" id="P22771"/>
<dbReference type="ChEMBL" id="CHEMBL2328"/>
<dbReference type="GlyCosmos" id="P22771">
    <property type="glycosylation" value="2 sites, No reported glycans"/>
</dbReference>
<dbReference type="GlyGen" id="P22771">
    <property type="glycosylation" value="2 sites"/>
</dbReference>
<dbReference type="PhosphoSitePlus" id="P22771"/>
<dbReference type="PaxDb" id="10116-ENSRNOP00000004426"/>
<dbReference type="GeneID" id="24397"/>
<dbReference type="KEGG" id="rno:24397"/>
<dbReference type="UCSC" id="RGD:2705">
    <molecule id="P22771-1"/>
    <property type="organism name" value="rat"/>
</dbReference>
<dbReference type="AGR" id="RGD:2705"/>
<dbReference type="CTD" id="2742"/>
<dbReference type="RGD" id="2705">
    <property type="gene designation" value="Glra2"/>
</dbReference>
<dbReference type="eggNOG" id="KOG3644">
    <property type="taxonomic scope" value="Eukaryota"/>
</dbReference>
<dbReference type="InParanoid" id="P22771"/>
<dbReference type="OrthoDB" id="407674at2759"/>
<dbReference type="PhylomeDB" id="P22771"/>
<dbReference type="TreeFam" id="TF315453"/>
<dbReference type="Reactome" id="R-RNO-112314">
    <property type="pathway name" value="Neurotransmitter receptors and postsynaptic signal transmission"/>
</dbReference>
<dbReference type="PRO" id="PR:P22771"/>
<dbReference type="Proteomes" id="UP000002494">
    <property type="component" value="Unplaced"/>
</dbReference>
<dbReference type="GO" id="GO:0042995">
    <property type="term" value="C:cell projection"/>
    <property type="evidence" value="ECO:0007669"/>
    <property type="project" value="UniProtKB-SubCell"/>
</dbReference>
<dbReference type="GO" id="GO:0034707">
    <property type="term" value="C:chloride channel complex"/>
    <property type="evidence" value="ECO:0007669"/>
    <property type="project" value="UniProtKB-KW"/>
</dbReference>
<dbReference type="GO" id="GO:0098982">
    <property type="term" value="C:GABA-ergic synapse"/>
    <property type="evidence" value="ECO:0000266"/>
    <property type="project" value="RGD"/>
</dbReference>
<dbReference type="GO" id="GO:0098690">
    <property type="term" value="C:glycinergic synapse"/>
    <property type="evidence" value="ECO:0000266"/>
    <property type="project" value="RGD"/>
</dbReference>
<dbReference type="GO" id="GO:0005886">
    <property type="term" value="C:plasma membrane"/>
    <property type="evidence" value="ECO:0000266"/>
    <property type="project" value="RGD"/>
</dbReference>
<dbReference type="GO" id="GO:0099634">
    <property type="term" value="C:postsynaptic specialization membrane"/>
    <property type="evidence" value="ECO:0000266"/>
    <property type="project" value="RGD"/>
</dbReference>
<dbReference type="GO" id="GO:0016934">
    <property type="term" value="F:extracellularly glycine-gated chloride channel activity"/>
    <property type="evidence" value="ECO:0000266"/>
    <property type="project" value="RGD"/>
</dbReference>
<dbReference type="GO" id="GO:0016594">
    <property type="term" value="F:glycine binding"/>
    <property type="evidence" value="ECO:0000266"/>
    <property type="project" value="RGD"/>
</dbReference>
<dbReference type="GO" id="GO:0022852">
    <property type="term" value="F:glycine-gated chloride ion channel activity"/>
    <property type="evidence" value="ECO:0000266"/>
    <property type="project" value="RGD"/>
</dbReference>
<dbReference type="GO" id="GO:0046872">
    <property type="term" value="F:metal ion binding"/>
    <property type="evidence" value="ECO:0007669"/>
    <property type="project" value="UniProtKB-KW"/>
</dbReference>
<dbReference type="GO" id="GO:0004888">
    <property type="term" value="F:transmembrane signaling receptor activity"/>
    <property type="evidence" value="ECO:0007669"/>
    <property type="project" value="InterPro"/>
</dbReference>
<dbReference type="GO" id="GO:1904315">
    <property type="term" value="F:transmitter-gated monoatomic ion channel activity involved in regulation of postsynaptic membrane potential"/>
    <property type="evidence" value="ECO:0000266"/>
    <property type="project" value="RGD"/>
</dbReference>
<dbReference type="GO" id="GO:0071230">
    <property type="term" value="P:cellular response to amino acid stimulus"/>
    <property type="evidence" value="ECO:0000266"/>
    <property type="project" value="RGD"/>
</dbReference>
<dbReference type="GO" id="GO:0071361">
    <property type="term" value="P:cellular response to ethanol"/>
    <property type="evidence" value="ECO:0000266"/>
    <property type="project" value="RGD"/>
</dbReference>
<dbReference type="GO" id="GO:0071294">
    <property type="term" value="P:cellular response to zinc ion"/>
    <property type="evidence" value="ECO:0000266"/>
    <property type="project" value="RGD"/>
</dbReference>
<dbReference type="GO" id="GO:1902476">
    <property type="term" value="P:chloride transmembrane transport"/>
    <property type="evidence" value="ECO:0000266"/>
    <property type="project" value="RGD"/>
</dbReference>
<dbReference type="GO" id="GO:0050804">
    <property type="term" value="P:modulation of chemical synaptic transmission"/>
    <property type="evidence" value="ECO:0000266"/>
    <property type="project" value="RGD"/>
</dbReference>
<dbReference type="GO" id="GO:0034220">
    <property type="term" value="P:monoatomic ion transmembrane transport"/>
    <property type="evidence" value="ECO:0000266"/>
    <property type="project" value="RGD"/>
</dbReference>
<dbReference type="GO" id="GO:0007218">
    <property type="term" value="P:neuropeptide signaling pathway"/>
    <property type="evidence" value="ECO:0000266"/>
    <property type="project" value="RGD"/>
</dbReference>
<dbReference type="GO" id="GO:0021510">
    <property type="term" value="P:spinal cord development"/>
    <property type="evidence" value="ECO:0000270"/>
    <property type="project" value="RGD"/>
</dbReference>
<dbReference type="GO" id="GO:0007416">
    <property type="term" value="P:synapse assembly"/>
    <property type="evidence" value="ECO:0000270"/>
    <property type="project" value="RGD"/>
</dbReference>
<dbReference type="CDD" id="cd19009">
    <property type="entry name" value="LGIC_ECD_GlyR_alpha"/>
    <property type="match status" value="1"/>
</dbReference>
<dbReference type="CDD" id="cd19060">
    <property type="entry name" value="LGIC_TM_GlyR_alpha"/>
    <property type="match status" value="1"/>
</dbReference>
<dbReference type="FunFam" id="2.70.170.10:FF:000002">
    <property type="entry name" value="Glycine receptor alpha 1 subunit"/>
    <property type="match status" value="1"/>
</dbReference>
<dbReference type="FunFam" id="1.20.58.390:FF:000003">
    <property type="entry name" value="Glycine receptor alpha 2 subunit"/>
    <property type="match status" value="1"/>
</dbReference>
<dbReference type="Gene3D" id="2.70.170.10">
    <property type="entry name" value="Neurotransmitter-gated ion-channel ligand-binding domain"/>
    <property type="match status" value="1"/>
</dbReference>
<dbReference type="Gene3D" id="1.20.58.390">
    <property type="entry name" value="Neurotransmitter-gated ion-channel transmembrane domain"/>
    <property type="match status" value="1"/>
</dbReference>
<dbReference type="InterPro" id="IPR006028">
    <property type="entry name" value="GABAA/Glycine_rcpt"/>
</dbReference>
<dbReference type="InterPro" id="IPR008127">
    <property type="entry name" value="Glycine_rcpt_A"/>
</dbReference>
<dbReference type="InterPro" id="IPR008129">
    <property type="entry name" value="Glycine_rcpt_A2"/>
</dbReference>
<dbReference type="InterPro" id="IPR006202">
    <property type="entry name" value="Neur_chan_lig-bd"/>
</dbReference>
<dbReference type="InterPro" id="IPR036734">
    <property type="entry name" value="Neur_chan_lig-bd_sf"/>
</dbReference>
<dbReference type="InterPro" id="IPR006201">
    <property type="entry name" value="Neur_channel"/>
</dbReference>
<dbReference type="InterPro" id="IPR036719">
    <property type="entry name" value="Neuro-gated_channel_TM_sf"/>
</dbReference>
<dbReference type="InterPro" id="IPR038050">
    <property type="entry name" value="Neuro_actylchol_rec"/>
</dbReference>
<dbReference type="InterPro" id="IPR006029">
    <property type="entry name" value="Neurotrans-gated_channel_TM"/>
</dbReference>
<dbReference type="InterPro" id="IPR018000">
    <property type="entry name" value="Neurotransmitter_ion_chnl_CS"/>
</dbReference>
<dbReference type="NCBIfam" id="TIGR00860">
    <property type="entry name" value="LIC"/>
    <property type="match status" value="1"/>
</dbReference>
<dbReference type="PANTHER" id="PTHR18945">
    <property type="entry name" value="NEUROTRANSMITTER GATED ION CHANNEL"/>
    <property type="match status" value="1"/>
</dbReference>
<dbReference type="Pfam" id="PF02931">
    <property type="entry name" value="Neur_chan_LBD"/>
    <property type="match status" value="1"/>
</dbReference>
<dbReference type="Pfam" id="PF02932">
    <property type="entry name" value="Neur_chan_memb"/>
    <property type="match status" value="1"/>
</dbReference>
<dbReference type="PRINTS" id="PR00253">
    <property type="entry name" value="GABAARECEPTR"/>
</dbReference>
<dbReference type="PRINTS" id="PR01673">
    <property type="entry name" value="GLYRALPHA"/>
</dbReference>
<dbReference type="PRINTS" id="PR01675">
    <property type="entry name" value="GLYRALPHA2"/>
</dbReference>
<dbReference type="PRINTS" id="PR00252">
    <property type="entry name" value="NRIONCHANNEL"/>
</dbReference>
<dbReference type="SUPFAM" id="SSF90112">
    <property type="entry name" value="Neurotransmitter-gated ion-channel transmembrane pore"/>
    <property type="match status" value="1"/>
</dbReference>
<dbReference type="SUPFAM" id="SSF63712">
    <property type="entry name" value="Nicotinic receptor ligand binding domain-like"/>
    <property type="match status" value="1"/>
</dbReference>
<dbReference type="PROSITE" id="PS00236">
    <property type="entry name" value="NEUROTR_ION_CHANNEL"/>
    <property type="match status" value="1"/>
</dbReference>
<feature type="signal peptide" evidence="4">
    <location>
        <begin position="1"/>
        <end position="27"/>
    </location>
</feature>
<feature type="chain" id="PRO_0000000418" description="Glycine receptor subunit alpha-2">
    <location>
        <begin position="28"/>
        <end position="452"/>
    </location>
</feature>
<feature type="topological domain" description="Extracellular" evidence="1">
    <location>
        <begin position="28"/>
        <end position="256"/>
    </location>
</feature>
<feature type="transmembrane region" description="Helical; Name=1" evidence="1">
    <location>
        <begin position="257"/>
        <end position="278"/>
    </location>
</feature>
<feature type="topological domain" description="Cytoplasmic" evidence="1">
    <location>
        <begin position="279"/>
        <end position="283"/>
    </location>
</feature>
<feature type="transmembrane region" description="Helical; Name=2" evidence="1">
    <location>
        <begin position="284"/>
        <end position="304"/>
    </location>
</feature>
<feature type="topological domain" description="Extracellular" evidence="1">
    <location>
        <begin position="305"/>
        <end position="315"/>
    </location>
</feature>
<feature type="transmembrane region" description="Helical; Name=3" evidence="1">
    <location>
        <begin position="316"/>
        <end position="336"/>
    </location>
</feature>
<feature type="topological domain" description="Cytoplasmic" evidence="1">
    <location>
        <begin position="337"/>
        <end position="420"/>
    </location>
</feature>
<feature type="transmembrane region" description="Helical; Name=4" evidence="1">
    <location>
        <begin position="421"/>
        <end position="441"/>
    </location>
</feature>
<feature type="topological domain" description="Extracellular" evidence="1">
    <location>
        <begin position="442"/>
        <end position="452"/>
    </location>
</feature>
<feature type="binding site" description="in one chain" evidence="2">
    <location>
        <position position="99"/>
    </location>
    <ligand>
        <name>glycine</name>
        <dbReference type="ChEBI" id="CHEBI:57305"/>
        <label>1</label>
        <note>agonist; ligand shared between two adjacent GLRA2 subunits</note>
    </ligand>
</feature>
<feature type="binding site" evidence="2">
    <location>
        <position position="99"/>
    </location>
    <ligand>
        <name>glycine</name>
        <dbReference type="ChEBI" id="CHEBI:57305"/>
        <label>2</label>
        <note>agonist; ligand shared with an adjacent GLRB subunit</note>
    </ligand>
</feature>
<feature type="binding site" evidence="2">
    <location>
        <position position="99"/>
    </location>
    <ligand>
        <name>strychnine</name>
        <dbReference type="ChEBI" id="CHEBI:90700"/>
        <note>antagonist</note>
    </ligand>
</feature>
<feature type="binding site" description="in one chain" evidence="2">
    <location>
        <position position="163"/>
    </location>
    <ligand>
        <name>glycine</name>
        <dbReference type="ChEBI" id="CHEBI:57305"/>
        <label>1</label>
        <note>agonist; ligand shared between two adjacent GLRA2 subunits</note>
    </ligand>
</feature>
<feature type="binding site" evidence="2">
    <location>
        <position position="163"/>
    </location>
    <ligand>
        <name>glycine</name>
        <dbReference type="ChEBI" id="CHEBI:57305"/>
        <label>2</label>
        <note>agonist; ligand shared with an adjacent GLRB subunit</note>
    </ligand>
</feature>
<feature type="binding site" evidence="1">
    <location>
        <position position="226"/>
    </location>
    <ligand>
        <name>Zn(2+)</name>
        <dbReference type="ChEBI" id="CHEBI:29105"/>
    </ligand>
</feature>
<feature type="binding site" evidence="1">
    <location>
        <position position="228"/>
    </location>
    <ligand>
        <name>Zn(2+)</name>
        <dbReference type="ChEBI" id="CHEBI:29105"/>
    </ligand>
</feature>
<feature type="binding site" description="in other chain" evidence="2">
    <location>
        <position position="238"/>
    </location>
    <ligand>
        <name>glycine</name>
        <dbReference type="ChEBI" id="CHEBI:57305"/>
        <label>1</label>
        <note>agonist; ligand shared between two adjacent GLRA2 subunits</note>
    </ligand>
</feature>
<feature type="binding site" evidence="2">
    <location>
        <position position="238"/>
    </location>
    <ligand>
        <name>glycine</name>
        <dbReference type="ChEBI" id="CHEBI:57305"/>
        <label>3</label>
        <note>agonist; ligand shared with an adjacent GLRB subunit</note>
    </ligand>
</feature>
<feature type="binding site" evidence="1">
    <location>
        <position position="249"/>
    </location>
    <ligand>
        <name>Zn(2+)</name>
        <dbReference type="ChEBI" id="CHEBI:29105"/>
    </ligand>
</feature>
<feature type="site" description="Important for glycine and strychnine binding" evidence="8">
    <location>
        <position position="194"/>
    </location>
</feature>
<feature type="site" description="Important for obstruction of the ion pore in the closed conformation" evidence="1">
    <location>
        <position position="295"/>
    </location>
</feature>
<feature type="glycosylation site" description="N-linked (GlcNAc...) asparagine" evidence="4">
    <location>
        <position position="72"/>
    </location>
</feature>
<feature type="glycosylation site" description="N-linked (GlcNAc...) asparagine" evidence="4">
    <location>
        <position position="103"/>
    </location>
</feature>
<feature type="disulfide bond" evidence="1">
    <location>
        <begin position="172"/>
        <end position="186"/>
    </location>
</feature>
<feature type="disulfide bond" evidence="1">
    <location>
        <begin position="232"/>
        <end position="243"/>
    </location>
</feature>
<feature type="splice variant" id="VSP_000083" description="In isoform Alpha-2B." evidence="7">
    <original>VT</original>
    <variation>IA</variation>
    <location>
        <begin position="85"/>
        <end position="86"/>
    </location>
</feature>
<feature type="sequence variant" description="Increased sensitivity to strychnine." evidence="6">
    <original>E</original>
    <variation>G</variation>
    <location>
        <position position="194"/>
    </location>
</feature>
<proteinExistence type="evidence at protein level"/>
<accession>P22771</accession>
<accession>Q91W28</accession>
<sequence length="452" mass="52053">MNRQLVNILTALFAFFLGTNHFREAFCKDHDSRSGKHPSQTLSPSDFLDKLMGRTSGYDARIRPNFKGPPVNVTCNIFINSFGSVTETTMDYRVNIFLRQQWNDSRLAYSEYPDDSLDLDPSMLDSIWKPDLFFANEKGANFHDVTTDNKLLRISKNGKVLYSIRLTLTLSCPMDLKNFPMDVQTCTMQLESFEYTMNDLIFEWLSDGPVQVAEGLTLPQFILKEEKELGYCTKHYNTGKFTCIEVKFHLERQMGYYLIQMYIPSLLIVILSWVSFWINMDAAPARVALGITTVLTMTTQSSGSRASLPKVSYVKAIDIWMAVCLLFVFAALLEYAAVNFVSRQHKEFLRLRRRQKRQNKEEDVTRESRFNFSGYGMGHCLQVKDGTAVKATPANPLPQPPKDADAIKKKFVDRAKRIDTISRAAFPLAFLIFNIFYWITYKIIRHEDVHKK</sequence>
<gene>
    <name evidence="9" type="primary">Glra2</name>
</gene>
<organism>
    <name type="scientific">Rattus norvegicus</name>
    <name type="common">Rat</name>
    <dbReference type="NCBI Taxonomy" id="10116"/>
    <lineage>
        <taxon>Eukaryota</taxon>
        <taxon>Metazoa</taxon>
        <taxon>Chordata</taxon>
        <taxon>Craniata</taxon>
        <taxon>Vertebrata</taxon>
        <taxon>Euteleostomi</taxon>
        <taxon>Mammalia</taxon>
        <taxon>Eutheria</taxon>
        <taxon>Euarchontoglires</taxon>
        <taxon>Glires</taxon>
        <taxon>Rodentia</taxon>
        <taxon>Myomorpha</taxon>
        <taxon>Muroidea</taxon>
        <taxon>Muridae</taxon>
        <taxon>Murinae</taxon>
        <taxon>Rattus</taxon>
    </lineage>
</organism>
<comment type="function">
    <text evidence="2 6">Subunit of heteromeric glycine-gated chloride channels (PubMed:2176511). Plays a role in synaptic plasticity. Contributes to the generation of inhibitory postsynaptic currents, and is involved in the down-regulation of neuronal excitability. Plays a role in cellular responses to ethanol.</text>
</comment>
<comment type="catalytic activity">
    <reaction evidence="6">
        <text>chloride(in) = chloride(out)</text>
        <dbReference type="Rhea" id="RHEA:29823"/>
        <dbReference type="ChEBI" id="CHEBI:17996"/>
    </reaction>
</comment>
<comment type="activity regulation">
    <text evidence="2 6">Channel opening is triggered by extracellular glycine. Channel opening is also triggered by taurine and beta-alanine (PubMed:2176511). Inhibited by strychnine (PubMed:2176511). Inhibited by picrotoxin (By similarity).</text>
</comment>
<comment type="subunit">
    <text evidence="2">Interacts with GLRB. Heteropentamer composed of GLRA2 and GLRB; functional GLRB-GLRA2 heteropentamers contain four GLRA2 subunits and one GLRB subunit, although alternative subunit composition cannot be excluded. Homopentamer (in vitro). Both homopentamers and heteropentamers form functional ion channels, but their characteristics are subtly different.</text>
</comment>
<comment type="subcellular location">
    <subcellularLocation>
        <location evidence="3">Postsynaptic cell membrane</location>
        <topology evidence="3">Multi-pass membrane protein</topology>
    </subcellularLocation>
    <subcellularLocation>
        <location evidence="3">Synapse</location>
    </subcellularLocation>
    <subcellularLocation>
        <location evidence="6">Cell membrane</location>
        <topology evidence="1">Multi-pass membrane protein</topology>
    </subcellularLocation>
    <subcellularLocation>
        <location evidence="3">Cell projection</location>
    </subcellularLocation>
</comment>
<comment type="alternative products">
    <event type="alternative splicing"/>
    <isoform>
        <id>P22771-1</id>
        <name>Alpha-2*</name>
        <sequence type="displayed"/>
    </isoform>
    <isoform>
        <id>P22771-2</id>
        <name>Alpha-2B</name>
        <sequence type="described" ref="VSP_000083"/>
    </isoform>
</comment>
<comment type="developmental stage">
    <text evidence="5 6">The alpha-2* subunit isoform is present in neonatal rats, but not in older animals (PubMed:1707830, PubMed:2176511). Isoform Alpha-2* and isoform Alpha-2B are detected in embryonic and neonatal brain. At later postnatal stages, isoform Alpha-2* levels greatly decrease while isoform Alpha-2B is barely detectable (PubMed:1645300).</text>
</comment>
<comment type="miscellaneous">
    <text evidence="6">The alpha subunit binds strychnine.</text>
</comment>
<comment type="miscellaneous">
    <text evidence="6">Identical to the human subunit alpha-2, except for 5 substitutions at positions 18, 24, 37, 194 and 404. Substitution at position 194 (G -&gt; E) accounts for the lower strychnine sensitivity observed in neonatal rats.</text>
</comment>
<comment type="similarity">
    <text evidence="7">Belongs to the ligand-gated ion channel (TC 1.A.9) family. Glycine receptor (TC 1.A.9.3) subfamily. GLRA2 sub-subfamily.</text>
</comment>
<protein>
    <recommendedName>
        <fullName evidence="8">Glycine receptor subunit alpha-2</fullName>
    </recommendedName>
    <alternativeName>
        <fullName>Glycine receptor strychnine-binding subunit</fullName>
    </alternativeName>
</protein>
<reference key="1">
    <citation type="journal article" date="1990" name="Neuron">
        <title>A single amino acid exchange alters the pharmacology of neonatal rat glycine receptor subunit.</title>
        <authorList>
            <person name="Kuhse J."/>
            <person name="Schmieden V."/>
            <person name="Betz H."/>
        </authorList>
    </citation>
    <scope>NUCLEOTIDE SEQUENCE [MRNA] (ISOFORM ALPHA-2*)</scope>
    <scope>FUNCTION</scope>
    <scope>SUBCELLULAR LOCATION</scope>
    <scope>ACTIVITY REGULATION</scope>
    <scope>DEVELOPMENTAL STAGE</scope>
    <scope>VARIANT GLY-194</scope>
    <scope>CHARACTERIZATION OF VARIANT GLY-194</scope>
    <source>
        <tissue>Brain</tissue>
    </source>
</reference>
<reference key="2">
    <citation type="journal article" date="1991" name="FEBS Lett.">
        <title>Cloning of a glycine receptor subtype expressed in rat brain and spinal cord during a specific period of neuronal development.</title>
        <authorList>
            <person name="Akagi H."/>
            <person name="Hirai K."/>
            <person name="Hishinuma F."/>
        </authorList>
    </citation>
    <scope>NUCLEOTIDE SEQUENCE [MRNA] (ISOFORM ALPHA-2*)</scope>
    <scope>DEVELOPMENTAL STAGE</scope>
    <source>
        <strain>Wistar</strain>
        <tissue>Spinal cord</tissue>
    </source>
</reference>
<reference key="3">
    <citation type="journal article" date="1991" name="FEBS Lett.">
        <title>Alternative splicing generates two isoforms of the alpha 2 subunit of the inhibitory glycine receptor.</title>
        <authorList>
            <person name="Kuhse J."/>
            <person name="Kuryatov A."/>
            <person name="Maulet Y."/>
            <person name="Malosio M.L."/>
            <person name="Schmieden V."/>
            <person name="Betz H."/>
        </authorList>
    </citation>
    <scope>NUCLEOTIDE SEQUENCE [MRNA] (ISOFORMS ALPHA-2* AND ALPHA-2B)</scope>
    <scope>DEVELOPMENTAL STAGE</scope>
    <source>
        <tissue>Brain</tissue>
    </source>
</reference>
<reference key="4">
    <citation type="submission" date="2001-03" db="EMBL/GenBank/DDBJ databases">
        <title>Concentration dependence of single channel currents through rat recombinant alpha 1 glycine receptors.</title>
        <authorList>
            <person name="Beato M."/>
            <person name="Groot Kormelink P.J."/>
            <person name="Colquhoun D."/>
            <person name="Sivilotti L.G."/>
        </authorList>
    </citation>
    <scope>NUCLEOTIDE SEQUENCE [MRNA] (ISOFORM ALPHA-2*)</scope>
    <source>
        <strain>Sprague-Dawley</strain>
        <tissue>Brain</tissue>
    </source>
</reference>
<name>GLRA2_RAT</name>